<proteinExistence type="evidence at protein level"/>
<dbReference type="EC" id="3.2.1.n1" evidence="2"/>
<dbReference type="EC" id="3.2.1.n2" evidence="2"/>
<dbReference type="EC" id="3.2.1.22" evidence="2"/>
<dbReference type="EMBL" id="AM109955">
    <property type="protein sequence ID" value="CAJ33351.1"/>
    <property type="molecule type" value="Genomic_DNA"/>
</dbReference>
<dbReference type="EMBL" id="CR626927">
    <property type="protein sequence ID" value="CAH06588.1"/>
    <property type="molecule type" value="Genomic_DNA"/>
</dbReference>
<dbReference type="RefSeq" id="WP_010992217.1">
    <property type="nucleotide sequence ID" value="NC_003228.3"/>
</dbReference>
<dbReference type="SMR" id="Q5LGZ8"/>
<dbReference type="CAZy" id="GH110">
    <property type="family name" value="Glycoside Hydrolase Family 110"/>
</dbReference>
<dbReference type="PaxDb" id="272559-BF9343_0807"/>
<dbReference type="GeneID" id="60366299"/>
<dbReference type="KEGG" id="bfs:BF9343_0807"/>
<dbReference type="eggNOG" id="COG5434">
    <property type="taxonomic scope" value="Bacteria"/>
</dbReference>
<dbReference type="HOGENOM" id="CLU_017693_0_0_10"/>
<dbReference type="BioCyc" id="MetaCyc:MONOMER-21426"/>
<dbReference type="SABIO-RK" id="Q5LGZ8"/>
<dbReference type="Proteomes" id="UP000006731">
    <property type="component" value="Chromosome"/>
</dbReference>
<dbReference type="GO" id="GO:0004557">
    <property type="term" value="F:alpha-galactosidase activity"/>
    <property type="evidence" value="ECO:0007669"/>
    <property type="project" value="UniProtKB-EC"/>
</dbReference>
<dbReference type="Gene3D" id="2.160.20.10">
    <property type="entry name" value="Single-stranded right-handed beta-helix, Pectin lyase-like"/>
    <property type="match status" value="2"/>
</dbReference>
<dbReference type="InterPro" id="IPR056441">
    <property type="entry name" value="Beta-barrel_GLAA-B_II"/>
</dbReference>
<dbReference type="InterPro" id="IPR012334">
    <property type="entry name" value="Pectin_lyas_fold"/>
</dbReference>
<dbReference type="InterPro" id="IPR011050">
    <property type="entry name" value="Pectin_lyase_fold/virulence"/>
</dbReference>
<dbReference type="Pfam" id="PF23763">
    <property type="entry name" value="Beta-barrel_GLAA-B_I"/>
    <property type="match status" value="1"/>
</dbReference>
<dbReference type="Pfam" id="PF23764">
    <property type="entry name" value="Beta-barrel_GLAA-B_II"/>
    <property type="match status" value="1"/>
</dbReference>
<dbReference type="SUPFAM" id="SSF51126">
    <property type="entry name" value="Pectin lyase-like"/>
    <property type="match status" value="1"/>
</dbReference>
<feature type="signal peptide" evidence="1">
    <location>
        <begin position="1"/>
        <end position="22"/>
    </location>
</feature>
<feature type="chain" id="PRO_0000348476" description="Alpha-1,3-galactosidase B">
    <location>
        <begin position="23"/>
        <end position="595"/>
    </location>
</feature>
<feature type="repeat" description="PbH1 1">
    <location>
        <begin position="432"/>
        <end position="454"/>
    </location>
</feature>
<feature type="repeat" description="PbH1 2">
    <location>
        <begin position="455"/>
        <end position="477"/>
    </location>
</feature>
<feature type="repeat" description="PbH1 3">
    <location>
        <begin position="488"/>
        <end position="541"/>
    </location>
</feature>
<sequence length="595" mass="67011">MKTILLFALSLLLSLSVSDVCAQERVYDISQFGLKANSKKNASPVVRKAIAKIKAECRDGEKVILRFPAGRYNFHEAGSTVREYYISNHDQDNPKKVGIALEDMKNLTIDGQGSEFVFYGRMIPVSLLRSENCVLKNFSIDFEQPHIAQVQVVENDPEKGITFEPAPWVDYRISKDSVFEGLGEGWVMRYSWGIAFDGKTKHVVYNTSDIGCPTKGAFEVAPRRICSPKWKDARLVPGTVVAMRGWGRPTPGIFMSHDVNTSLLDVKVHYAEGMGLLAQLCEDITLDGFGVCLKGDNDPRYFTTQADATHFSGCKGKIVSKNGLYEGMMDDAINVHGTYLKVIKRVDDHTLIGRYMHDQSWGFEWGRPGDDVQFVRSETMELIGKQNQITAIRPYDKGEIRGAREFSITFKEAIDPAINEKSGFGIENLTWTPEVLFAGNTIRNNRARGTLFSTPKKTVVEDNLFDHTSGTAILLCGDCNGWFETGACRDVTIRRNRFINALTNMFQFTNAVISIYPEIPNLKDQQKYFHGGKDGGIVIEDNEFDTFDAPILYAKSVDGLIFRNNVIKTNTEFKPFHWNKDRFLLERVTNVKISE</sequence>
<reference key="1">
    <citation type="journal article" date="2007" name="Nat. Biotechnol.">
        <title>Bacterial glycosidases for the production of universal red blood cells.</title>
        <authorList>
            <person name="Liu Q.P."/>
            <person name="Sulzenbacher G."/>
            <person name="Yuan H."/>
            <person name="Bennett E.P."/>
            <person name="Pietz G."/>
            <person name="Saunders K."/>
            <person name="Spence J."/>
            <person name="Nudelman E."/>
            <person name="Levery S.B."/>
            <person name="White T."/>
            <person name="Neveu J.M."/>
            <person name="Lane W.S."/>
            <person name="Bourne Y."/>
            <person name="Olsson M.L."/>
            <person name="Henrissat B."/>
            <person name="Clausen H."/>
        </authorList>
    </citation>
    <scope>NUCLEOTIDE SEQUENCE [GENOMIC DNA]</scope>
    <scope>FUNCTION</scope>
    <scope>CATALYTIC ACTIVITY</scope>
    <scope>BIOPHYSICOCHEMICAL PROPERTIES</scope>
</reference>
<reference key="2">
    <citation type="journal article" date="2005" name="Science">
        <title>Extensive DNA inversions in the B. fragilis genome control variable gene expression.</title>
        <authorList>
            <person name="Cerdeno-Tarraga A.-M."/>
            <person name="Patrick S."/>
            <person name="Crossman L.C."/>
            <person name="Blakely G."/>
            <person name="Abratt V."/>
            <person name="Lennard N."/>
            <person name="Poxton I."/>
            <person name="Duerden B."/>
            <person name="Harris B."/>
            <person name="Quail M.A."/>
            <person name="Barron A."/>
            <person name="Clark L."/>
            <person name="Corton C."/>
            <person name="Doggett J."/>
            <person name="Holden M.T.G."/>
            <person name="Larke N."/>
            <person name="Line A."/>
            <person name="Lord A."/>
            <person name="Norbertczak H."/>
            <person name="Ormond D."/>
            <person name="Price C."/>
            <person name="Rabbinowitsch E."/>
            <person name="Woodward J."/>
            <person name="Barrell B.G."/>
            <person name="Parkhill J."/>
        </authorList>
    </citation>
    <scope>NUCLEOTIDE SEQUENCE [LARGE SCALE GENOMIC DNA]</scope>
    <source>
        <strain>ATCC 25285 / DSM 2151 / CCUG 4856 / JCM 11019 / LMG 10263 / NCTC 9343 / Onslow / VPI 2553 / EN-2</strain>
    </source>
</reference>
<reference key="3">
    <citation type="journal article" date="2008" name="J. Biol. Chem.">
        <title>Identification of a GH110 subfamily of alpha1,3-galactosidases: novel enzymes for removal of the alpha3Gal xenotransplantation antigen.</title>
        <authorList>
            <person name="Liu Q.P."/>
            <person name="Yuan H."/>
            <person name="Bennett E.P."/>
            <person name="Levery S.B."/>
            <person name="Nudelman E."/>
            <person name="Spence J."/>
            <person name="Pietz G."/>
            <person name="Saunders K."/>
            <person name="White T."/>
            <person name="Olsson M.L."/>
            <person name="Henrissat B."/>
            <person name="Sulzenbacher G."/>
            <person name="Clausen H."/>
        </authorList>
    </citation>
    <scope>ENZYME ACTIVITY</scope>
</reference>
<organism>
    <name type="scientific">Bacteroides fragilis (strain ATCC 25285 / DSM 2151 / CCUG 4856 / JCM 11019 / LMG 10263 / NCTC 9343 / Onslow / VPI 2553 / EN-2)</name>
    <dbReference type="NCBI Taxonomy" id="272559"/>
    <lineage>
        <taxon>Bacteria</taxon>
        <taxon>Pseudomonadati</taxon>
        <taxon>Bacteroidota</taxon>
        <taxon>Bacteroidia</taxon>
        <taxon>Bacteroidales</taxon>
        <taxon>Bacteroidaceae</taxon>
        <taxon>Bacteroides</taxon>
    </lineage>
</organism>
<comment type="function">
    <text evidence="2">Alpha-galactosidase. Removes both branched alpha-1,3-linked galactose residues of blood group B antigens and linear alpha-1,3-linked galactose structures.</text>
</comment>
<comment type="catalytic activity">
    <reaction evidence="2">
        <text>Hydrolysis of terminal, non-reducing branched (1-&gt;3)-alpha-D-galactosidic residues, producing free D-galactose.</text>
        <dbReference type="EC" id="3.2.1.n1"/>
    </reaction>
</comment>
<comment type="catalytic activity">
    <reaction evidence="2">
        <text>Hydrolysis of terminal, non-reducing linear (1-&gt;3)-alpha-D-galactosidic residues, producing free D-galactose.</text>
        <dbReference type="EC" id="3.2.1.n2"/>
    </reaction>
</comment>
<comment type="catalytic activity">
    <reaction evidence="2">
        <text>Hydrolysis of terminal, non-reducing alpha-D-galactose residues in alpha-D-galactosides, including galactose oligosaccharides, galactomannans and galactolipids.</text>
        <dbReference type="EC" id="3.2.1.22"/>
    </reaction>
</comment>
<comment type="biophysicochemical properties">
    <kinetics>
        <KM evidence="2">0.7 mM for Galalpha-pNP</KM>
    </kinetics>
    <phDependence>
        <text evidence="2">Optimum pH is 5-7.5.</text>
    </phDependence>
</comment>
<comment type="similarity">
    <text evidence="3">Belongs to the glycosyl hydrolase 110 family. B subfamily.</text>
</comment>
<keyword id="KW-0326">Glycosidase</keyword>
<keyword id="KW-0378">Hydrolase</keyword>
<keyword id="KW-0677">Repeat</keyword>
<keyword id="KW-0732">Signal</keyword>
<name>GLAB_BACFN</name>
<accession>Q5LGZ8</accession>
<accession>A4Q8G6</accession>
<gene>
    <name type="primary">glaB</name>
    <name type="synonym">fragA</name>
    <name type="ordered locus">BF0845</name>
</gene>
<protein>
    <recommendedName>
        <fullName>Alpha-1,3-galactosidase B</fullName>
        <ecNumber evidence="2">3.2.1.n1</ecNumber>
        <ecNumber evidence="2">3.2.1.n2</ecNumber>
    </recommendedName>
    <alternativeName>
        <fullName>BfGal110B</fullName>
    </alternativeName>
    <alternativeName>
        <fullName>Exo-alpha-galactosidase B</fullName>
        <ecNumber evidence="2">3.2.1.22</ecNumber>
    </alternativeName>
</protein>
<evidence type="ECO:0000255" key="1"/>
<evidence type="ECO:0000269" key="2">
    <source>
    </source>
</evidence>
<evidence type="ECO:0000305" key="3"/>